<keyword id="KW-1185">Reference proteome</keyword>
<keyword id="KW-0808">Transferase</keyword>
<organism>
    <name type="scientific">Caenorhabditis elegans</name>
    <dbReference type="NCBI Taxonomy" id="6239"/>
    <lineage>
        <taxon>Eukaryota</taxon>
        <taxon>Metazoa</taxon>
        <taxon>Ecdysozoa</taxon>
        <taxon>Nematoda</taxon>
        <taxon>Chromadorea</taxon>
        <taxon>Rhabditida</taxon>
        <taxon>Rhabditina</taxon>
        <taxon>Rhabditomorpha</taxon>
        <taxon>Rhabditoidea</taxon>
        <taxon>Rhabditidae</taxon>
        <taxon>Peloderinae</taxon>
        <taxon>Caenorhabditis</taxon>
    </lineage>
</organism>
<feature type="chain" id="PRO_0000185927" description="Glutathione S-transferase 4">
    <location>
        <begin position="1"/>
        <end position="207"/>
    </location>
</feature>
<feature type="domain" description="GST N-terminal">
    <location>
        <begin position="2"/>
        <end position="79"/>
    </location>
</feature>
<feature type="domain" description="GST C-terminal">
    <location>
        <begin position="81"/>
        <end position="207"/>
    </location>
</feature>
<feature type="binding site" evidence="1">
    <location>
        <position position="8"/>
    </location>
    <ligand>
        <name>glutathione</name>
        <dbReference type="ChEBI" id="CHEBI:57925"/>
    </ligand>
</feature>
<feature type="binding site" evidence="1">
    <location>
        <position position="39"/>
    </location>
    <ligand>
        <name>glutathione</name>
        <dbReference type="ChEBI" id="CHEBI:57925"/>
    </ligand>
</feature>
<feature type="binding site" evidence="2">
    <location>
        <position position="43"/>
    </location>
    <ligand>
        <name>glutathione</name>
        <dbReference type="ChEBI" id="CHEBI:57925"/>
    </ligand>
</feature>
<feature type="binding site" evidence="1">
    <location>
        <begin position="49"/>
        <end position="51"/>
    </location>
    <ligand>
        <name>glutathione</name>
        <dbReference type="ChEBI" id="CHEBI:57925"/>
    </ligand>
</feature>
<feature type="binding site" evidence="1">
    <location>
        <begin position="63"/>
        <end position="64"/>
    </location>
    <ligand>
        <name>glutathione</name>
        <dbReference type="ChEBI" id="CHEBI:57925"/>
    </ligand>
</feature>
<reference key="1">
    <citation type="journal article" date="1998" name="Nucleic Acids Res.">
        <title>Identification of stress-responsive genes in Caenorhabditis elegans using RT-PCR differential display.</title>
        <authorList>
            <person name="Tawe W.N."/>
            <person name="Eschbach M.-L."/>
            <person name="Walter R.D."/>
            <person name="Henkle-Duehrsen K."/>
        </authorList>
    </citation>
    <scope>NUCLEOTIDE SEQUENCE [MRNA]</scope>
    <source>
        <strain>Bristol N2</strain>
    </source>
</reference>
<reference key="2">
    <citation type="journal article" date="1998" name="Science">
        <title>Genome sequence of the nematode C. elegans: a platform for investigating biology.</title>
        <authorList>
            <consortium name="The C. elegans sequencing consortium"/>
        </authorList>
    </citation>
    <scope>NUCLEOTIDE SEQUENCE [LARGE SCALE GENOMIC DNA]</scope>
    <source>
        <strain>Bristol N2</strain>
    </source>
</reference>
<reference key="3">
    <citation type="journal article" date="2011" name="PLoS Pathog.">
        <title>Ce-Duox1/BLI-3 generated reactive oxygen species trigger protective SKN-1 activity via p38 MAPK signaling during infection in C. elegans.</title>
        <authorList>
            <person name="Hoeven R.V."/>
            <person name="McCallum K.C."/>
            <person name="Cruz M.R."/>
            <person name="Garsin D.A."/>
        </authorList>
    </citation>
    <scope>FUNCTION</scope>
    <scope>INDUCTION BY PARAQUAT</scope>
</reference>
<reference key="4">
    <citation type="journal article" date="2018" name="Nat. Commun.">
        <title>Visible light reduces C. elegans longevity.</title>
        <authorList>
            <person name="De Magalhaes Filho C.D."/>
            <person name="Henriquez B."/>
            <person name="Seah N.E."/>
            <person name="Evans R.M."/>
            <person name="Lapierre L.R."/>
            <person name="Dillin A."/>
        </authorList>
    </citation>
    <scope>INDUCTION</scope>
</reference>
<accession>Q21355</accession>
<name>GST4_CAEEL</name>
<dbReference type="EC" id="2.5.1.18"/>
<dbReference type="EMBL" id="AF010239">
    <property type="protein sequence ID" value="AAB65417.1"/>
    <property type="molecule type" value="mRNA"/>
</dbReference>
<dbReference type="EMBL" id="BX284604">
    <property type="protein sequence ID" value="CAA93086.1"/>
    <property type="molecule type" value="Genomic_DNA"/>
</dbReference>
<dbReference type="PIR" id="T37462">
    <property type="entry name" value="T37462"/>
</dbReference>
<dbReference type="RefSeq" id="NP_501848.1">
    <property type="nucleotide sequence ID" value="NM_069447.8"/>
</dbReference>
<dbReference type="SMR" id="Q21355"/>
<dbReference type="BioGRID" id="42988">
    <property type="interactions" value="5"/>
</dbReference>
<dbReference type="DIP" id="DIP-24743N"/>
<dbReference type="FunCoup" id="Q21355">
    <property type="interactions" value="135"/>
</dbReference>
<dbReference type="STRING" id="6239.K08F4.7.1"/>
<dbReference type="PaxDb" id="6239-K08F4.7"/>
<dbReference type="PeptideAtlas" id="Q21355"/>
<dbReference type="EnsemblMetazoa" id="K08F4.7.1">
    <property type="protein sequence ID" value="K08F4.7.1"/>
    <property type="gene ID" value="WBGene00001752"/>
</dbReference>
<dbReference type="GeneID" id="177886"/>
<dbReference type="KEGG" id="cel:CELE_K08F4.7"/>
<dbReference type="UCSC" id="K08F4.7.1">
    <property type="organism name" value="c. elegans"/>
</dbReference>
<dbReference type="AGR" id="WB:WBGene00001752"/>
<dbReference type="CTD" id="177886"/>
<dbReference type="WormBase" id="K08F4.7">
    <property type="protein sequence ID" value="CE06155"/>
    <property type="gene ID" value="WBGene00001752"/>
    <property type="gene designation" value="gst-4"/>
</dbReference>
<dbReference type="eggNOG" id="KOG1695">
    <property type="taxonomic scope" value="Eukaryota"/>
</dbReference>
<dbReference type="GeneTree" id="ENSGT00970000195858"/>
<dbReference type="HOGENOM" id="CLU_039475_1_1_1"/>
<dbReference type="InParanoid" id="Q21355"/>
<dbReference type="OMA" id="IGEEITW"/>
<dbReference type="OrthoDB" id="414243at2759"/>
<dbReference type="PhylomeDB" id="Q21355"/>
<dbReference type="PRO" id="PR:Q21355"/>
<dbReference type="Proteomes" id="UP000001940">
    <property type="component" value="Chromosome IV"/>
</dbReference>
<dbReference type="GO" id="GO:0043292">
    <property type="term" value="C:contractile muscle fiber"/>
    <property type="evidence" value="ECO:0000314"/>
    <property type="project" value="WormBase"/>
</dbReference>
<dbReference type="GO" id="GO:0004364">
    <property type="term" value="F:glutathione transferase activity"/>
    <property type="evidence" value="ECO:0000314"/>
    <property type="project" value="WormBase"/>
</dbReference>
<dbReference type="GO" id="GO:0006749">
    <property type="term" value="P:glutathione metabolic process"/>
    <property type="evidence" value="ECO:0000314"/>
    <property type="project" value="WormBase"/>
</dbReference>
<dbReference type="CDD" id="cd03192">
    <property type="entry name" value="GST_C_Sigma_like"/>
    <property type="match status" value="1"/>
</dbReference>
<dbReference type="CDD" id="cd03039">
    <property type="entry name" value="GST_N_Sigma_like"/>
    <property type="match status" value="1"/>
</dbReference>
<dbReference type="FunFam" id="1.20.1050.10:FF:000031">
    <property type="entry name" value="Glutathione S-Transferase"/>
    <property type="match status" value="1"/>
</dbReference>
<dbReference type="FunFam" id="3.40.30.10:FF:000189">
    <property type="entry name" value="Glutathione S-Transferase"/>
    <property type="match status" value="1"/>
</dbReference>
<dbReference type="Gene3D" id="1.20.1050.10">
    <property type="match status" value="1"/>
</dbReference>
<dbReference type="Gene3D" id="3.40.30.10">
    <property type="entry name" value="Glutaredoxin"/>
    <property type="match status" value="1"/>
</dbReference>
<dbReference type="InterPro" id="IPR010987">
    <property type="entry name" value="Glutathione-S-Trfase_C-like"/>
</dbReference>
<dbReference type="InterPro" id="IPR036282">
    <property type="entry name" value="Glutathione-S-Trfase_C_sf"/>
</dbReference>
<dbReference type="InterPro" id="IPR040079">
    <property type="entry name" value="Glutathione_S-Trfase"/>
</dbReference>
<dbReference type="InterPro" id="IPR004045">
    <property type="entry name" value="Glutathione_S-Trfase_N"/>
</dbReference>
<dbReference type="InterPro" id="IPR004046">
    <property type="entry name" value="GST_C"/>
</dbReference>
<dbReference type="InterPro" id="IPR050213">
    <property type="entry name" value="GST_superfamily"/>
</dbReference>
<dbReference type="InterPro" id="IPR036249">
    <property type="entry name" value="Thioredoxin-like_sf"/>
</dbReference>
<dbReference type="PANTHER" id="PTHR11571">
    <property type="entry name" value="GLUTATHIONE S-TRANSFERASE"/>
    <property type="match status" value="1"/>
</dbReference>
<dbReference type="PANTHER" id="PTHR11571:SF155">
    <property type="entry name" value="GLUTATHIONE S-TRANSFERASE 4"/>
    <property type="match status" value="1"/>
</dbReference>
<dbReference type="Pfam" id="PF14497">
    <property type="entry name" value="GST_C_3"/>
    <property type="match status" value="1"/>
</dbReference>
<dbReference type="Pfam" id="PF02798">
    <property type="entry name" value="GST_N"/>
    <property type="match status" value="1"/>
</dbReference>
<dbReference type="SFLD" id="SFLDG01205">
    <property type="entry name" value="AMPS.1"/>
    <property type="match status" value="1"/>
</dbReference>
<dbReference type="SFLD" id="SFLDS00019">
    <property type="entry name" value="Glutathione_Transferase_(cytos"/>
    <property type="match status" value="1"/>
</dbReference>
<dbReference type="SUPFAM" id="SSF47616">
    <property type="entry name" value="GST C-terminal domain-like"/>
    <property type="match status" value="1"/>
</dbReference>
<dbReference type="SUPFAM" id="SSF52833">
    <property type="entry name" value="Thioredoxin-like"/>
    <property type="match status" value="1"/>
</dbReference>
<dbReference type="PROSITE" id="PS50405">
    <property type="entry name" value="GST_CTER"/>
    <property type="match status" value="1"/>
</dbReference>
<dbReference type="PROSITE" id="PS50404">
    <property type="entry name" value="GST_NTER"/>
    <property type="match status" value="1"/>
</dbReference>
<sequence>MPNYKLLYFDARALAEPIRIMFAMLNVPYEDYRVSVEEWSKLKPTTPFGQLPILQVDGEQFGQSMSITRYLARKFGLAGKTAEEEAYADSIVDQYRDFIFFFRQFTSSVFYGSDADHINKVRFEVVEPARDDFLAIINKFLAKSKSGFLVGDSLTWADIVIADNLTSLLKNGFLDFNKEKKLEEFYNKIHSIPEIKNYVATRKDSIV</sequence>
<comment type="function">
    <text evidence="3 4">Conjugation of reduced glutathione to a wide number of exogenous and endogenous hydrophobic electrophiles (By similarity). May play a role in the detoxification of reactive oxygen species produced during pathogenic bacterial infection (PubMed:22216003).</text>
</comment>
<comment type="catalytic activity">
    <reaction evidence="3">
        <text>RX + glutathione = an S-substituted glutathione + a halide anion + H(+)</text>
        <dbReference type="Rhea" id="RHEA:16437"/>
        <dbReference type="ChEBI" id="CHEBI:15378"/>
        <dbReference type="ChEBI" id="CHEBI:16042"/>
        <dbReference type="ChEBI" id="CHEBI:17792"/>
        <dbReference type="ChEBI" id="CHEBI:57925"/>
        <dbReference type="ChEBI" id="CHEBI:90779"/>
        <dbReference type="EC" id="2.5.1.18"/>
    </reaction>
</comment>
<comment type="induction">
    <text evidence="4 5">By paraquat. Induced by white light exposure (PubMed:29500338).</text>
</comment>
<comment type="similarity">
    <text evidence="6">Belongs to the GST superfamily. Sigma family.</text>
</comment>
<gene>
    <name evidence="7" type="primary">gst-4</name>
    <name evidence="7" type="ORF">K08F4.7</name>
</gene>
<protein>
    <recommendedName>
        <fullName>Glutathione S-transferase 4</fullName>
        <ecNumber>2.5.1.18</ecNumber>
    </recommendedName>
    <alternativeName>
        <fullName>CeGST1</fullName>
    </alternativeName>
    <alternativeName>
        <fullName>GST class-sigma</fullName>
    </alternativeName>
</protein>
<proteinExistence type="evidence at transcript level"/>
<evidence type="ECO:0000250" key="1">
    <source>
        <dbReference type="UniProtKB" id="O60760"/>
    </source>
</evidence>
<evidence type="ECO:0000250" key="2">
    <source>
        <dbReference type="UniProtKB" id="P46088"/>
    </source>
</evidence>
<evidence type="ECO:0000250" key="3">
    <source>
        <dbReference type="UniProtKB" id="P46436"/>
    </source>
</evidence>
<evidence type="ECO:0000269" key="4">
    <source>
    </source>
</evidence>
<evidence type="ECO:0000269" key="5">
    <source>
    </source>
</evidence>
<evidence type="ECO:0000305" key="6"/>
<evidence type="ECO:0000312" key="7">
    <source>
        <dbReference type="WormBase" id="K08F4.7"/>
    </source>
</evidence>